<gene>
    <name type="primary">secG</name>
    <name type="ordered locus">Ta1303</name>
</gene>
<name>SECG_THEAC</name>
<evidence type="ECO:0000250" key="1"/>
<evidence type="ECO:0000305" key="2"/>
<proteinExistence type="inferred from homology"/>
<protein>
    <recommendedName>
        <fullName>Preprotein translocase subunit SecG</fullName>
    </recommendedName>
    <alternativeName>
        <fullName>Protein transport protein Sec61 subunit beta homolog</fullName>
    </alternativeName>
</protein>
<feature type="chain" id="PRO_0000157281" description="Preprotein translocase subunit SecG">
    <location>
        <begin position="1"/>
        <end position="55"/>
    </location>
</feature>
<feature type="topological domain" description="Cytoplasmic" evidence="1">
    <location>
        <begin position="1"/>
        <end position="31"/>
    </location>
</feature>
<feature type="transmembrane region" description="Helical" evidence="1">
    <location>
        <begin position="32"/>
        <end position="51"/>
    </location>
</feature>
<feature type="topological domain" description="Extracellular" evidence="1">
    <location>
        <begin position="52"/>
        <end position="55"/>
    </location>
</feature>
<accession>P60466</accession>
<organism>
    <name type="scientific">Thermoplasma acidophilum (strain ATCC 25905 / DSM 1728 / JCM 9062 / NBRC 15155 / AMRC-C165)</name>
    <dbReference type="NCBI Taxonomy" id="273075"/>
    <lineage>
        <taxon>Archaea</taxon>
        <taxon>Methanobacteriati</taxon>
        <taxon>Thermoplasmatota</taxon>
        <taxon>Thermoplasmata</taxon>
        <taxon>Thermoplasmatales</taxon>
        <taxon>Thermoplasmataceae</taxon>
        <taxon>Thermoplasma</taxon>
    </lineage>
</organism>
<sequence length="55" mass="6082">MASDRKSEGFQSGAGLIRYFEEEEIKGPALDPKLVVYMGIAVAIIVEIAKIFWPP</sequence>
<keyword id="KW-1003">Cell membrane</keyword>
<keyword id="KW-0472">Membrane</keyword>
<keyword id="KW-0653">Protein transport</keyword>
<keyword id="KW-1185">Reference proteome</keyword>
<keyword id="KW-0811">Translocation</keyword>
<keyword id="KW-0812">Transmembrane</keyword>
<keyword id="KW-1133">Transmembrane helix</keyword>
<keyword id="KW-0813">Transport</keyword>
<comment type="function">
    <text evidence="1">Involved in protein export. The function of the beta subunit is unknown, but it may be involved in stabilization of the trimeric complex (By similarity).</text>
</comment>
<comment type="subunit">
    <text evidence="1">Component of the protein translocase complex. Heterotrimer consisting of alpha (SecY), beta (SecG) and gamma (SecE) subunits. Can form oligomers of the heterotrimer (By similarity).</text>
</comment>
<comment type="subcellular location">
    <subcellularLocation>
        <location evidence="1">Cell membrane</location>
        <topology evidence="1">Single-pass membrane protein</topology>
    </subcellularLocation>
</comment>
<comment type="similarity">
    <text evidence="2">Belongs to the SEC61-beta family.</text>
</comment>
<dbReference type="EMBL" id="AL445067">
    <property type="status" value="NOT_ANNOTATED_CDS"/>
    <property type="molecule type" value="Genomic_DNA"/>
</dbReference>
<dbReference type="RefSeq" id="WP_010901709.1">
    <property type="nucleotide sequence ID" value="NC_002578.1"/>
</dbReference>
<dbReference type="SMR" id="P60466"/>
<dbReference type="PaxDb" id="273075-Ta1302a"/>
<dbReference type="eggNOG" id="arCOG02957">
    <property type="taxonomic scope" value="Archaea"/>
</dbReference>
<dbReference type="InParanoid" id="P60466"/>
<dbReference type="OrthoDB" id="43651at2157"/>
<dbReference type="Proteomes" id="UP000001024">
    <property type="component" value="Chromosome"/>
</dbReference>
<dbReference type="GO" id="GO:0005886">
    <property type="term" value="C:plasma membrane"/>
    <property type="evidence" value="ECO:0007669"/>
    <property type="project" value="UniProtKB-SubCell"/>
</dbReference>
<dbReference type="GO" id="GO:0015031">
    <property type="term" value="P:protein transport"/>
    <property type="evidence" value="ECO:0007669"/>
    <property type="project" value="UniProtKB-UniRule"/>
</dbReference>
<dbReference type="HAMAP" id="MF_00751">
    <property type="entry name" value="SecG"/>
    <property type="match status" value="1"/>
</dbReference>
<dbReference type="InterPro" id="IPR023531">
    <property type="entry name" value="Preprot_translocase_SecG"/>
</dbReference>
<dbReference type="InterPro" id="IPR016482">
    <property type="entry name" value="SecG/Sec61-beta/Sbh"/>
</dbReference>
<dbReference type="NCBIfam" id="NF002318">
    <property type="entry name" value="PRK01253.1"/>
    <property type="match status" value="1"/>
</dbReference>
<dbReference type="Pfam" id="PF03911">
    <property type="entry name" value="Sec61_beta"/>
    <property type="match status" value="1"/>
</dbReference>
<reference key="1">
    <citation type="journal article" date="2000" name="Nature">
        <title>The genome sequence of the thermoacidophilic scavenger Thermoplasma acidophilum.</title>
        <authorList>
            <person name="Ruepp A."/>
            <person name="Graml W."/>
            <person name="Santos-Martinez M.-L."/>
            <person name="Koretke K.K."/>
            <person name="Volker C."/>
            <person name="Mewes H.-W."/>
            <person name="Frishman D."/>
            <person name="Stocker S."/>
            <person name="Lupas A.N."/>
            <person name="Baumeister W."/>
        </authorList>
    </citation>
    <scope>NUCLEOTIDE SEQUENCE [LARGE SCALE GENOMIC DNA]</scope>
    <source>
        <strain>ATCC 25905 / DSM 1728 / JCM 9062 / NBRC 15155 / AMRC-C165</strain>
    </source>
</reference>